<feature type="signal peptide" evidence="2">
    <location>
        <begin position="1"/>
        <end position="33"/>
    </location>
</feature>
<feature type="chain" id="PRO_0000387590" description="Vacuolating cytotoxin autotransporter">
    <location>
        <begin position="34"/>
        <end position="1291"/>
    </location>
</feature>
<feature type="chain" id="PRO_0000002720" description="Vacuolating cytotoxin">
    <location>
        <begin position="34"/>
        <end status="unknown"/>
    </location>
</feature>
<feature type="chain" id="PRO_0000002721" description="Vacuolating cytotoxin translocator" evidence="2">
    <location>
        <begin status="unknown"/>
        <end position="1291"/>
    </location>
</feature>
<feature type="domain" description="Autotransporter" evidence="3">
    <location>
        <begin position="1018"/>
        <end position="1291"/>
    </location>
</feature>
<feature type="region of interest" description="Disordered" evidence="4">
    <location>
        <begin position="326"/>
        <end position="374"/>
    </location>
</feature>
<feature type="compositionally biased region" description="Polar residues" evidence="4">
    <location>
        <begin position="338"/>
        <end position="347"/>
    </location>
</feature>
<feature type="compositionally biased region" description="Polar residues" evidence="4">
    <location>
        <begin position="354"/>
        <end position="374"/>
    </location>
</feature>
<name>VACA4_HELPX</name>
<organism>
    <name type="scientific">Helicobacter pylori</name>
    <name type="common">Campylobacter pylori</name>
    <dbReference type="NCBI Taxonomy" id="210"/>
    <lineage>
        <taxon>Bacteria</taxon>
        <taxon>Pseudomonadati</taxon>
        <taxon>Campylobacterota</taxon>
        <taxon>Epsilonproteobacteria</taxon>
        <taxon>Campylobacterales</taxon>
        <taxon>Helicobacteraceae</taxon>
        <taxon>Helicobacter</taxon>
    </lineage>
</organism>
<sequence>MEIQQTHRKINRPLVSLALVGALVSITPQQSHAAFFTTVIIPAIVGGIATGAAVGTVSGLLGWGLKQAEEANKTPDKPDKVWRIQAGKGFNEFPNKEYDLYKSLLSSKIDGGWDWGNAARHYWVKDGQWNKLEVDMQNAVGTYNLSGLINFTGGDLDVNMQKATLRLGQFNGNSFTSYKDSADRTTRVDFNAKNILIDNFLEINNRVGSGAGRKASSTVLTLQASEGITSRENAEISLYDGATLNLASNSVKLMGNVWMGRLQYVGAYLAPSYSTINTSKVTGEVNFNHLTVGDHNAAQAGIIASNKTHIGTLDLWQSAGLNIIAPPEGGYKDKPNDKPSNTTQNNAKNDKQESSQNNSNTQVINPPNSAQKTEIQPTQVIDGPFAGGKNTVVNINRINTNADGTIRVGGFKASLTTNAAHLHIGKGGINLSNQASGRSLLVENLTGNITVDGPLRVNNQVGGYALAGSSANFEFKAGTDTKNGTATFNNDISLGRFVNLKVDAHTANFKGIDTGNGGFNTLDFSGVTNKVNINKLITASTNVAVKNFNINELVVKTNGVSVGEYTHFSEDIGSQSRINTVRLETGTRSIYSGGVKFKGGEKLVINDFYYAPWNYFDARNIKNVEITNKLAFGPQGSPWGTAKLMFNNLTLGQNAVMDYSQFSNLTIQGDFVNNQGTINYLVRGGQVATLNVGNAAAMFFSNNVDSATGFYQPLMKINSAQDLIKNKEHVLLKAKIIGYGNVSAGTDSIANVNLIEQFKERLALYNNNNRMDICVVRNTDDIKACGTAIGNQSMVNNPENYKYLEGKAWKNIGISKTANGSKISVHYLGNSTPTENGGNTTNLPTNTTNKVRFASYALIKNAPFARYSATPNLVAINQHDFGTIESVFELANRSNDIDTLYANSGAQGRDLLQTLLIDSHDAGYARTMIDATSANEITKQLNTATTTLNNIASLEHKTSGLQTLSLSNAMILNSRLVNLSRRHTNHIDSFAKRLQALKDQRFASLESAAEVLYQFAPKYEKPTNVWANAIGGTSLNSGGNASLYGTSAGVDAYLNGEVEAIVGGFGSYGYSSFSNQANSLNSGANNTNFGVYSRIFANQHEFDFEAQGALGSDQSSLNFKSALLRDLNQSYNYLAYSAATRASYGYDFAFFRNALVLKPSVGVSYNHLGSTNFKSNSNQKVALKNGASSQHLFNASANVEARYYYGDTSYFYMNAGVLQEFANFGSSNAVSLNTFKVNATRNPLNTHARVMMGGELKLAKEVFLNLGFVYLHNLISNIGHFASNLGMRYSF</sequence>
<evidence type="ECO:0000250" key="1"/>
<evidence type="ECO:0000255" key="2"/>
<evidence type="ECO:0000255" key="3">
    <source>
        <dbReference type="PROSITE-ProRule" id="PRU00556"/>
    </source>
</evidence>
<evidence type="ECO:0000256" key="4">
    <source>
        <dbReference type="SAM" id="MobiDB-lite"/>
    </source>
</evidence>
<keyword id="KW-0998">Cell outer membrane</keyword>
<keyword id="KW-0472">Membrane</keyword>
<keyword id="KW-0574">Periplasm</keyword>
<keyword id="KW-0964">Secreted</keyword>
<keyword id="KW-0732">Signal</keyword>
<keyword id="KW-0800">Toxin</keyword>
<keyword id="KW-0812">Transmembrane</keyword>
<keyword id="KW-1134">Transmembrane beta strand</keyword>
<keyword id="KW-0843">Virulence</keyword>
<gene>
    <name type="primary">vacA</name>
</gene>
<reference key="1">
    <citation type="journal article" date="1994" name="Mol. Microbiol.">
        <title>Genetic analysis of the Helicobacter pylori vacuolating cytotoxin: structural similarities with the IgA protease type of exported protein.</title>
        <authorList>
            <person name="Haas R."/>
            <person name="Schmitt W."/>
        </authorList>
    </citation>
    <scope>NUCLEOTIDE SEQUENCE [GENOMIC DNA]</scope>
    <source>
        <strain>185-44</strain>
    </source>
</reference>
<proteinExistence type="inferred from homology"/>
<comment type="function">
    <text>Induces vacuolation of eukaryotic cells. Causes ulceration and gastric lesions.</text>
</comment>
<comment type="subcellular location">
    <molecule>Vacuolating cytotoxin autotransporter</molecule>
    <subcellularLocation>
        <location evidence="1">Periplasm</location>
    </subcellularLocation>
</comment>
<comment type="subcellular location">
    <molecule>Vacuolating cytotoxin</molecule>
    <subcellularLocation>
        <location>Secreted</location>
    </subcellularLocation>
    <subcellularLocation>
        <location>Cell surface</location>
    </subcellularLocation>
</comment>
<comment type="subcellular location">
    <molecule>Vacuolating cytotoxin translocator</molecule>
    <subcellularLocation>
        <location evidence="1">Cell outer membrane</location>
        <topology evidence="1">Multi-pass membrane protein</topology>
    </subcellularLocation>
    <text evidence="1">The cleaved C-terminal fragment (autotransporter domain) is localized in the outer membrane.</text>
</comment>
<comment type="domain">
    <text evidence="1">The signal peptide, cleaved at the inner membrane, guides the autotransporter protein to the periplasmic space. Then, insertion of the C-terminal translocator domain in the outer membrane forms a hydrophilic pore for the translocation of the passenger domain to the bacterial cell surface, with subsequent cleavage (By similarity).</text>
</comment>
<accession>Q48258</accession>
<protein>
    <recommendedName>
        <fullName>Vacuolating cytotoxin autotransporter</fullName>
    </recommendedName>
    <component>
        <recommendedName>
            <fullName>Vacuolating cytotoxin</fullName>
        </recommendedName>
    </component>
    <component>
        <recommendedName>
            <fullName>Vacuolating cytotoxin translocator</fullName>
        </recommendedName>
    </component>
</protein>
<dbReference type="EMBL" id="Z26883">
    <property type="protein sequence ID" value="CAA81528.1"/>
    <property type="molecule type" value="Genomic_DNA"/>
</dbReference>
<dbReference type="PIR" id="S44983">
    <property type="entry name" value="S44983"/>
</dbReference>
<dbReference type="SMR" id="Q48258"/>
<dbReference type="GO" id="GO:0009279">
    <property type="term" value="C:cell outer membrane"/>
    <property type="evidence" value="ECO:0007669"/>
    <property type="project" value="UniProtKB-SubCell"/>
</dbReference>
<dbReference type="GO" id="GO:0009986">
    <property type="term" value="C:cell surface"/>
    <property type="evidence" value="ECO:0007669"/>
    <property type="project" value="UniProtKB-SubCell"/>
</dbReference>
<dbReference type="GO" id="GO:0005576">
    <property type="term" value="C:extracellular region"/>
    <property type="evidence" value="ECO:0007669"/>
    <property type="project" value="UniProtKB-SubCell"/>
</dbReference>
<dbReference type="GO" id="GO:0042597">
    <property type="term" value="C:periplasmic space"/>
    <property type="evidence" value="ECO:0007669"/>
    <property type="project" value="UniProtKB-SubCell"/>
</dbReference>
<dbReference type="GO" id="GO:0090729">
    <property type="term" value="F:toxin activity"/>
    <property type="evidence" value="ECO:0007669"/>
    <property type="project" value="UniProtKB-KW"/>
</dbReference>
<dbReference type="Gene3D" id="2.40.128.130">
    <property type="entry name" value="Autotransporter beta-domain"/>
    <property type="match status" value="1"/>
</dbReference>
<dbReference type="InterPro" id="IPR005546">
    <property type="entry name" value="Autotransporte_beta"/>
</dbReference>
<dbReference type="InterPro" id="IPR036709">
    <property type="entry name" value="Autotransporte_beta_dom_sf"/>
</dbReference>
<dbReference type="InterPro" id="IPR006315">
    <property type="entry name" value="OM_autotransptr_brl_dom"/>
</dbReference>
<dbReference type="InterPro" id="IPR003842">
    <property type="entry name" value="Vacuolating_cytotoxin"/>
</dbReference>
<dbReference type="NCBIfam" id="TIGR01414">
    <property type="entry name" value="autotrans_barl"/>
    <property type="match status" value="1"/>
</dbReference>
<dbReference type="Pfam" id="PF02691">
    <property type="entry name" value="VacA"/>
    <property type="match status" value="1"/>
</dbReference>
<dbReference type="PRINTS" id="PR01656">
    <property type="entry name" value="VACCYTOTOXIN"/>
</dbReference>
<dbReference type="SMART" id="SM00869">
    <property type="entry name" value="Autotransporter"/>
    <property type="match status" value="1"/>
</dbReference>
<dbReference type="SUPFAM" id="SSF103515">
    <property type="entry name" value="Autotransporter"/>
    <property type="match status" value="1"/>
</dbReference>
<dbReference type="PROSITE" id="PS51208">
    <property type="entry name" value="AUTOTRANSPORTER"/>
    <property type="match status" value="1"/>
</dbReference>